<reference key="1">
    <citation type="journal article" date="2009" name="PLoS Biol.">
        <title>Lineage-specific biology revealed by a finished genome assembly of the mouse.</title>
        <authorList>
            <person name="Church D.M."/>
            <person name="Goodstadt L."/>
            <person name="Hillier L.W."/>
            <person name="Zody M.C."/>
            <person name="Goldstein S."/>
            <person name="She X."/>
            <person name="Bult C.J."/>
            <person name="Agarwala R."/>
            <person name="Cherry J.L."/>
            <person name="DiCuccio M."/>
            <person name="Hlavina W."/>
            <person name="Kapustin Y."/>
            <person name="Meric P."/>
            <person name="Maglott D."/>
            <person name="Birtle Z."/>
            <person name="Marques A.C."/>
            <person name="Graves T."/>
            <person name="Zhou S."/>
            <person name="Teague B."/>
            <person name="Potamousis K."/>
            <person name="Churas C."/>
            <person name="Place M."/>
            <person name="Herschleb J."/>
            <person name="Runnheim R."/>
            <person name="Forrest D."/>
            <person name="Amos-Landgraf J."/>
            <person name="Schwartz D.C."/>
            <person name="Cheng Z."/>
            <person name="Lindblad-Toh K."/>
            <person name="Eichler E.E."/>
            <person name="Ponting C.P."/>
        </authorList>
    </citation>
    <scope>NUCLEOTIDE SEQUENCE [LARGE SCALE GENOMIC DNA]</scope>
    <source>
        <strain>C57BL/6J</strain>
    </source>
</reference>
<reference key="2">
    <citation type="journal article" date="2004" name="Genome Res.">
        <title>The status, quality, and expansion of the NIH full-length cDNA project: the Mammalian Gene Collection (MGC).</title>
        <authorList>
            <consortium name="The MGC Project Team"/>
        </authorList>
    </citation>
    <scope>NUCLEOTIDE SEQUENCE [LARGE SCALE MRNA]</scope>
    <source>
        <tissue>Brain</tissue>
        <tissue>Heart</tissue>
    </source>
</reference>
<reference key="3">
    <citation type="journal article" date="2014" name="Mol. Cell. Proteomics">
        <title>Immunoaffinity enrichment and mass spectrometry analysis of protein methylation.</title>
        <authorList>
            <person name="Guo A."/>
            <person name="Gu H."/>
            <person name="Zhou J."/>
            <person name="Mulhern D."/>
            <person name="Wang Y."/>
            <person name="Lee K.A."/>
            <person name="Yang V."/>
            <person name="Aguiar M."/>
            <person name="Kornhauser J."/>
            <person name="Jia X."/>
            <person name="Ren J."/>
            <person name="Beausoleil S.A."/>
            <person name="Silva J.C."/>
            <person name="Vemulapalli V."/>
            <person name="Bedford M.T."/>
            <person name="Comb M.J."/>
        </authorList>
    </citation>
    <scope>METHYLATION [LARGE SCALE ANALYSIS] AT ARG-322</scope>
    <scope>IDENTIFICATION BY MASS SPECTROMETRY [LARGE SCALE ANALYSIS]</scope>
    <source>
        <tissue>Brain</tissue>
    </source>
</reference>
<reference key="4">
    <citation type="journal article" date="2017" name="Circulation">
        <title>Experimental Modeling Supports a Role for MyBP-HL as a Novel Myofilament Component in Arrhythmia and Dilated Cardiomyopathy.</title>
        <authorList>
            <person name="Barefield D.Y."/>
            <person name="Puckelwartz M.J."/>
            <person name="Kim E.Y."/>
            <person name="Wilsbacher L.D."/>
            <person name="Vo A.H."/>
            <person name="Waters E.A."/>
            <person name="Earley J.U."/>
            <person name="Hadhazy M."/>
            <person name="Dellefave-Castillo L."/>
            <person name="Pesce L.L."/>
            <person name="McNally E.M."/>
        </authorList>
    </citation>
    <scope>FUNCTION</scope>
    <scope>DISRUPTION PHENOTYPE</scope>
    <scope>TISSUE SPECIFICITY</scope>
    <scope>SUBCELLULAR LOCATION</scope>
</reference>
<protein>
    <recommendedName>
        <fullName evidence="6">Myosin-binding protein H-like</fullName>
    </recommendedName>
</protein>
<dbReference type="EMBL" id="AL671899">
    <property type="status" value="NOT_ANNOTATED_CDS"/>
    <property type="molecule type" value="Genomic_DNA"/>
</dbReference>
<dbReference type="EMBL" id="BC089625">
    <property type="protein sequence ID" value="AAH89625.1"/>
    <property type="molecule type" value="mRNA"/>
</dbReference>
<dbReference type="EMBL" id="BC132636">
    <property type="protein sequence ID" value="AAI32637.1"/>
    <property type="molecule type" value="mRNA"/>
</dbReference>
<dbReference type="EMBL" id="BC132638">
    <property type="protein sequence ID" value="AAI32639.1"/>
    <property type="molecule type" value="mRNA"/>
</dbReference>
<dbReference type="CCDS" id="CCDS17757.1"/>
<dbReference type="RefSeq" id="NP_081107.1">
    <property type="nucleotide sequence ID" value="NM_026831.1"/>
</dbReference>
<dbReference type="SMR" id="Q5FW53"/>
<dbReference type="FunCoup" id="Q5FW53">
    <property type="interactions" value="11"/>
</dbReference>
<dbReference type="STRING" id="10090.ENSMUSP00000088051"/>
<dbReference type="iPTMnet" id="Q5FW53"/>
<dbReference type="PhosphoSitePlus" id="Q5FW53"/>
<dbReference type="SwissPalm" id="Q5FW53"/>
<dbReference type="PaxDb" id="10090-ENSMUSP00000088051"/>
<dbReference type="ProteomicsDB" id="293421"/>
<dbReference type="Antibodypedia" id="33754">
    <property type="antibodies" value="67 antibodies from 18 providers"/>
</dbReference>
<dbReference type="DNASU" id="68753"/>
<dbReference type="Ensembl" id="ENSMUST00000090563.7">
    <property type="protein sequence ID" value="ENSMUSP00000088051.6"/>
    <property type="gene ID" value="ENSMUSG00000068745.7"/>
</dbReference>
<dbReference type="GeneID" id="68753"/>
<dbReference type="KEGG" id="mmu:68753"/>
<dbReference type="UCSC" id="uc008qyt.1">
    <property type="organism name" value="mouse"/>
</dbReference>
<dbReference type="AGR" id="MGI:1916003"/>
<dbReference type="CTD" id="343263"/>
<dbReference type="MGI" id="MGI:1916003">
    <property type="gene designation" value="Mybphl"/>
</dbReference>
<dbReference type="VEuPathDB" id="HostDB:ENSMUSG00000068745"/>
<dbReference type="eggNOG" id="ENOG502QVIQ">
    <property type="taxonomic scope" value="Eukaryota"/>
</dbReference>
<dbReference type="GeneTree" id="ENSGT00940000162165"/>
<dbReference type="HOGENOM" id="CLU_037185_0_0_1"/>
<dbReference type="InParanoid" id="Q5FW53"/>
<dbReference type="OMA" id="NGCALDT"/>
<dbReference type="OrthoDB" id="6107607at2759"/>
<dbReference type="PhylomeDB" id="Q5FW53"/>
<dbReference type="TreeFam" id="TF334735"/>
<dbReference type="BioGRID-ORCS" id="68753">
    <property type="hits" value="3 hits in 80 CRISPR screens"/>
</dbReference>
<dbReference type="PRO" id="PR:Q5FW53"/>
<dbReference type="Proteomes" id="UP000000589">
    <property type="component" value="Chromosome 3"/>
</dbReference>
<dbReference type="RNAct" id="Q5FW53">
    <property type="molecule type" value="protein"/>
</dbReference>
<dbReference type="Bgee" id="ENSMUSG00000068745">
    <property type="expression patterns" value="Expressed in extra-ocular muscle and 19 other cell types or tissues"/>
</dbReference>
<dbReference type="GO" id="GO:0036379">
    <property type="term" value="C:myofilament"/>
    <property type="evidence" value="ECO:0000314"/>
    <property type="project" value="UniProtKB"/>
</dbReference>
<dbReference type="GO" id="GO:0030017">
    <property type="term" value="C:sarcomere"/>
    <property type="evidence" value="ECO:0007669"/>
    <property type="project" value="UniProtKB-SubCell"/>
</dbReference>
<dbReference type="GO" id="GO:0001701">
    <property type="term" value="P:in utero embryonic development"/>
    <property type="evidence" value="ECO:0000315"/>
    <property type="project" value="MGI"/>
</dbReference>
<dbReference type="CDD" id="cd00063">
    <property type="entry name" value="FN3"/>
    <property type="match status" value="1"/>
</dbReference>
<dbReference type="FunFam" id="2.60.40.10:FF:000977">
    <property type="entry name" value="Myosin binding protein H like"/>
    <property type="match status" value="1"/>
</dbReference>
<dbReference type="FunFam" id="2.60.40.10:FF:000031">
    <property type="entry name" value="Myosin-binding protein C, slow type"/>
    <property type="match status" value="1"/>
</dbReference>
<dbReference type="FunFam" id="2.60.40.10:FF:000062">
    <property type="entry name" value="Myosin-binding protein C, slow type"/>
    <property type="match status" value="1"/>
</dbReference>
<dbReference type="Gene3D" id="2.60.40.10">
    <property type="entry name" value="Immunoglobulins"/>
    <property type="match status" value="3"/>
</dbReference>
<dbReference type="InterPro" id="IPR003961">
    <property type="entry name" value="FN3_dom"/>
</dbReference>
<dbReference type="InterPro" id="IPR036116">
    <property type="entry name" value="FN3_sf"/>
</dbReference>
<dbReference type="InterPro" id="IPR007110">
    <property type="entry name" value="Ig-like_dom"/>
</dbReference>
<dbReference type="InterPro" id="IPR036179">
    <property type="entry name" value="Ig-like_dom_sf"/>
</dbReference>
<dbReference type="InterPro" id="IPR013783">
    <property type="entry name" value="Ig-like_fold"/>
</dbReference>
<dbReference type="InterPro" id="IPR013098">
    <property type="entry name" value="Ig_I-set"/>
</dbReference>
<dbReference type="InterPro" id="IPR003599">
    <property type="entry name" value="Ig_sub"/>
</dbReference>
<dbReference type="InterPro" id="IPR003598">
    <property type="entry name" value="Ig_sub2"/>
</dbReference>
<dbReference type="InterPro" id="IPR050964">
    <property type="entry name" value="Striated_Muscle_Regulatory"/>
</dbReference>
<dbReference type="PANTHER" id="PTHR13817:SF171">
    <property type="entry name" value="STRETCHIN-MLCK, ISOFORM U"/>
    <property type="match status" value="1"/>
</dbReference>
<dbReference type="PANTHER" id="PTHR13817">
    <property type="entry name" value="TITIN"/>
    <property type="match status" value="1"/>
</dbReference>
<dbReference type="Pfam" id="PF00041">
    <property type="entry name" value="fn3"/>
    <property type="match status" value="1"/>
</dbReference>
<dbReference type="Pfam" id="PF07679">
    <property type="entry name" value="I-set"/>
    <property type="match status" value="2"/>
</dbReference>
<dbReference type="PRINTS" id="PR00014">
    <property type="entry name" value="FNTYPEIII"/>
</dbReference>
<dbReference type="SMART" id="SM00060">
    <property type="entry name" value="FN3"/>
    <property type="match status" value="1"/>
</dbReference>
<dbReference type="SMART" id="SM00409">
    <property type="entry name" value="IG"/>
    <property type="match status" value="2"/>
</dbReference>
<dbReference type="SMART" id="SM00408">
    <property type="entry name" value="IGc2"/>
    <property type="match status" value="2"/>
</dbReference>
<dbReference type="SUPFAM" id="SSF49265">
    <property type="entry name" value="Fibronectin type III"/>
    <property type="match status" value="1"/>
</dbReference>
<dbReference type="SUPFAM" id="SSF48726">
    <property type="entry name" value="Immunoglobulin"/>
    <property type="match status" value="2"/>
</dbReference>
<dbReference type="PROSITE" id="PS50853">
    <property type="entry name" value="FN3"/>
    <property type="match status" value="1"/>
</dbReference>
<dbReference type="PROSITE" id="PS50835">
    <property type="entry name" value="IG_LIKE"/>
    <property type="match status" value="2"/>
</dbReference>
<gene>
    <name evidence="7" type="primary">Mybphl</name>
</gene>
<sequence>METATTLEIASCSQRQVEAAADPADAKGPRTSHQQEAGSPSLQLLPSIEEHPKIWLPRALKQTYIRKAGETVNLLIPIQGKPKPQTTWTHNGCALDSSRVSVRNGEHDSILFIREAQRTDSGCYQLCVQLGGLQATATINILVIEKPGPPQSIKLVDVWGANATLEWTPPQDTGNTALLGYTVQKADKKSGLWFTVLERYHRTSCVVSNLIVGNSYAFRVFAENQCGLSDTAPVTADLAHIQKAATVYKAKGFAQRDLSEAPKFTQPLADCTTVTGYDTQLFCCVRASPRPKIIWLKNKMDLQGNPKYRALSQLGICSLEIRKPSPFDGGIYTCKAINALGEASVDCRVDVKAPH</sequence>
<feature type="chain" id="PRO_0000330020" description="Myosin-binding protein H-like">
    <location>
        <begin position="1"/>
        <end position="355"/>
    </location>
</feature>
<feature type="domain" description="Ig-like C2-type 1">
    <location>
        <begin position="46"/>
        <end position="140"/>
    </location>
</feature>
<feature type="domain" description="Fibronectin type-III" evidence="3">
    <location>
        <begin position="149"/>
        <end position="244"/>
    </location>
</feature>
<feature type="domain" description="Ig-like C2-type 2">
    <location>
        <begin position="262"/>
        <end position="346"/>
    </location>
</feature>
<feature type="region of interest" description="Disordered" evidence="4">
    <location>
        <begin position="1"/>
        <end position="41"/>
    </location>
</feature>
<feature type="compositionally biased region" description="Polar residues" evidence="4">
    <location>
        <begin position="1"/>
        <end position="16"/>
    </location>
</feature>
<feature type="compositionally biased region" description="Polar residues" evidence="4">
    <location>
        <begin position="31"/>
        <end position="41"/>
    </location>
</feature>
<feature type="modified residue" description="Phosphoserine" evidence="1">
    <location>
        <position position="39"/>
    </location>
</feature>
<feature type="modified residue" description="Omega-N-methylarginine" evidence="8">
    <location>
        <position position="322"/>
    </location>
</feature>
<feature type="disulfide bond" evidence="2">
    <location>
        <begin position="283"/>
        <end position="334"/>
    </location>
</feature>
<accession>Q5FW53</accession>
<comment type="function">
    <text evidence="5">Myosin-binding protein which plays a role in cardiac function (PubMed:28778945). Seems to regulate conduction in the atria and ventricular conduction systems (PubMed:28778945).</text>
</comment>
<comment type="subcellular location">
    <subcellularLocation>
        <location evidence="5">Cytoplasm</location>
        <location evidence="5">Myofibril</location>
        <location evidence="5">Sarcomere</location>
    </subcellularLocation>
</comment>
<comment type="tissue specificity">
    <text evidence="5">Expressed in the atria as well as in discrete puncta throughout the right ventricular wall and septum.</text>
</comment>
<comment type="disruption phenotype">
    <text evidence="5">Knockout mouse hearts exhibit a 36% reduction in fractional shortening and an increased diastolic ventricular chamber size (PubMed:28778945). Mutants show cardiac conduction system abnormalities with aberrant atrioventricular conduction and an increased rate of arrhythmia (PubMed:28778945).</text>
</comment>
<comment type="similarity">
    <text evidence="6">Belongs to the immunoglobulin superfamily. MyBP family.</text>
</comment>
<organism>
    <name type="scientific">Mus musculus</name>
    <name type="common">Mouse</name>
    <dbReference type="NCBI Taxonomy" id="10090"/>
    <lineage>
        <taxon>Eukaryota</taxon>
        <taxon>Metazoa</taxon>
        <taxon>Chordata</taxon>
        <taxon>Craniata</taxon>
        <taxon>Vertebrata</taxon>
        <taxon>Euteleostomi</taxon>
        <taxon>Mammalia</taxon>
        <taxon>Eutheria</taxon>
        <taxon>Euarchontoglires</taxon>
        <taxon>Glires</taxon>
        <taxon>Rodentia</taxon>
        <taxon>Myomorpha</taxon>
        <taxon>Muroidea</taxon>
        <taxon>Muridae</taxon>
        <taxon>Murinae</taxon>
        <taxon>Mus</taxon>
        <taxon>Mus</taxon>
    </lineage>
</organism>
<evidence type="ECO:0000250" key="1">
    <source>
        <dbReference type="UniProtKB" id="Q5PQM4"/>
    </source>
</evidence>
<evidence type="ECO:0000255" key="2">
    <source>
        <dbReference type="PROSITE-ProRule" id="PRU00114"/>
    </source>
</evidence>
<evidence type="ECO:0000255" key="3">
    <source>
        <dbReference type="PROSITE-ProRule" id="PRU00316"/>
    </source>
</evidence>
<evidence type="ECO:0000256" key="4">
    <source>
        <dbReference type="SAM" id="MobiDB-lite"/>
    </source>
</evidence>
<evidence type="ECO:0000269" key="5">
    <source>
    </source>
</evidence>
<evidence type="ECO:0000305" key="6"/>
<evidence type="ECO:0000312" key="7">
    <source>
        <dbReference type="MGI" id="MGI:1916003"/>
    </source>
</evidence>
<evidence type="ECO:0007744" key="8">
    <source>
    </source>
</evidence>
<keyword id="KW-0963">Cytoplasm</keyword>
<keyword id="KW-1015">Disulfide bond</keyword>
<keyword id="KW-0393">Immunoglobulin domain</keyword>
<keyword id="KW-0488">Methylation</keyword>
<keyword id="KW-0597">Phosphoprotein</keyword>
<keyword id="KW-1185">Reference proteome</keyword>
<keyword id="KW-0677">Repeat</keyword>
<proteinExistence type="evidence at protein level"/>
<name>MBPHL_MOUSE</name>